<organism>
    <name type="scientific">Aliivibrio fischeri (strain MJ11)</name>
    <name type="common">Vibrio fischeri</name>
    <dbReference type="NCBI Taxonomy" id="388396"/>
    <lineage>
        <taxon>Bacteria</taxon>
        <taxon>Pseudomonadati</taxon>
        <taxon>Pseudomonadota</taxon>
        <taxon>Gammaproteobacteria</taxon>
        <taxon>Vibrionales</taxon>
        <taxon>Vibrionaceae</taxon>
        <taxon>Aliivibrio</taxon>
    </lineage>
</organism>
<accession>B5FB46</accession>
<dbReference type="EMBL" id="CP001139">
    <property type="protein sequence ID" value="ACH65479.1"/>
    <property type="molecule type" value="Genomic_DNA"/>
</dbReference>
<dbReference type="RefSeq" id="WP_005420941.1">
    <property type="nucleotide sequence ID" value="NC_011184.1"/>
</dbReference>
<dbReference type="SMR" id="B5FB46"/>
<dbReference type="GeneID" id="54164929"/>
<dbReference type="KEGG" id="vfm:VFMJ11_2324"/>
<dbReference type="HOGENOM" id="CLU_115353_1_1_6"/>
<dbReference type="Proteomes" id="UP000001857">
    <property type="component" value="Chromosome I"/>
</dbReference>
<dbReference type="GO" id="GO:0003676">
    <property type="term" value="F:nucleic acid binding"/>
    <property type="evidence" value="ECO:0007669"/>
    <property type="project" value="InterPro"/>
</dbReference>
<dbReference type="CDD" id="cd20736">
    <property type="entry name" value="PoNe_Nuclease"/>
    <property type="match status" value="1"/>
</dbReference>
<dbReference type="Gene3D" id="3.40.1350.10">
    <property type="match status" value="1"/>
</dbReference>
<dbReference type="HAMAP" id="MF_00048">
    <property type="entry name" value="UPF0102"/>
    <property type="match status" value="1"/>
</dbReference>
<dbReference type="InterPro" id="IPR011335">
    <property type="entry name" value="Restrct_endonuc-II-like"/>
</dbReference>
<dbReference type="InterPro" id="IPR011856">
    <property type="entry name" value="tRNA_endonuc-like_dom_sf"/>
</dbReference>
<dbReference type="InterPro" id="IPR003509">
    <property type="entry name" value="UPF0102_YraN-like"/>
</dbReference>
<dbReference type="NCBIfam" id="NF009150">
    <property type="entry name" value="PRK12497.1-3"/>
    <property type="match status" value="1"/>
</dbReference>
<dbReference type="NCBIfam" id="TIGR00252">
    <property type="entry name" value="YraN family protein"/>
    <property type="match status" value="1"/>
</dbReference>
<dbReference type="PANTHER" id="PTHR34039">
    <property type="entry name" value="UPF0102 PROTEIN YRAN"/>
    <property type="match status" value="1"/>
</dbReference>
<dbReference type="PANTHER" id="PTHR34039:SF1">
    <property type="entry name" value="UPF0102 PROTEIN YRAN"/>
    <property type="match status" value="1"/>
</dbReference>
<dbReference type="Pfam" id="PF02021">
    <property type="entry name" value="UPF0102"/>
    <property type="match status" value="1"/>
</dbReference>
<dbReference type="SUPFAM" id="SSF52980">
    <property type="entry name" value="Restriction endonuclease-like"/>
    <property type="match status" value="1"/>
</dbReference>
<comment type="similarity">
    <text evidence="1">Belongs to the UPF0102 family.</text>
</comment>
<protein>
    <recommendedName>
        <fullName evidence="1">UPF0102 protein VFMJ11_2324</fullName>
    </recommendedName>
</protein>
<evidence type="ECO:0000255" key="1">
    <source>
        <dbReference type="HAMAP-Rule" id="MF_00048"/>
    </source>
</evidence>
<gene>
    <name type="ordered locus">VFMJ11_2324</name>
</gene>
<sequence length="123" mass="14679">MEKKQNKRAKGEFYELMAQRYLEQHQLTFIARNFQSKTGELDLIMRDQDSFVFVEVKYRNTSNFGSAQEMVTWQKQRKLQRTALFWLMKNKLSVEHTSFRFDVVAIHAQGKEINWIKNAIVEG</sequence>
<name>Y2324_ALIFM</name>
<proteinExistence type="inferred from homology"/>
<reference key="1">
    <citation type="submission" date="2008-08" db="EMBL/GenBank/DDBJ databases">
        <title>Complete sequence of Vibrio fischeri strain MJ11.</title>
        <authorList>
            <person name="Mandel M.J."/>
            <person name="Stabb E.V."/>
            <person name="Ruby E.G."/>
            <person name="Ferriera S."/>
            <person name="Johnson J."/>
            <person name="Kravitz S."/>
            <person name="Beeson K."/>
            <person name="Sutton G."/>
            <person name="Rogers Y.-H."/>
            <person name="Friedman R."/>
            <person name="Frazier M."/>
            <person name="Venter J.C."/>
        </authorList>
    </citation>
    <scope>NUCLEOTIDE SEQUENCE [LARGE SCALE GENOMIC DNA]</scope>
    <source>
        <strain>MJ11</strain>
    </source>
</reference>
<feature type="chain" id="PRO_1000091272" description="UPF0102 protein VFMJ11_2324">
    <location>
        <begin position="1"/>
        <end position="123"/>
    </location>
</feature>